<reference key="1">
    <citation type="journal article" date="1996" name="Nucleic Acids Res.">
        <title>Complete sequence analysis of the genome of the bacterium Mycoplasma pneumoniae.</title>
        <authorList>
            <person name="Himmelreich R."/>
            <person name="Hilbert H."/>
            <person name="Plagens H."/>
            <person name="Pirkl E."/>
            <person name="Li B.-C."/>
            <person name="Herrmann R."/>
        </authorList>
    </citation>
    <scope>NUCLEOTIDE SEQUENCE [LARGE SCALE GENOMIC DNA]</scope>
    <source>
        <strain>ATCC 29342 / M129 / Subtype 1</strain>
    </source>
</reference>
<keyword id="KW-1185">Reference proteome</keyword>
<sequence>MCPSSFVLVIRLWFPPLTGAIVNGTTSKLTRTQRRIAIVEFIFATLFFLPKTADQIQAAFLDYDVPERPLNDWQKEIVKVFSERCVEFIELIENQQQRNQAEVQSKYNKVSGKKVDLLTKAVILCALSEQHAQATDKPLLISEALLIMDHYSQVPEKKQTHALLDKLL</sequence>
<proteinExistence type="predicted"/>
<protein>
    <recommendedName>
        <fullName>Uncharacterized protein MG027 homolog</fullName>
    </recommendedName>
</protein>
<accession>P75084</accession>
<dbReference type="EMBL" id="U00089">
    <property type="protein sequence ID" value="AAB95772.1"/>
    <property type="molecule type" value="Genomic_DNA"/>
</dbReference>
<dbReference type="PIR" id="S73450">
    <property type="entry name" value="S73450"/>
</dbReference>
<dbReference type="RefSeq" id="NP_109718.1">
    <property type="nucleotide sequence ID" value="NC_000912.1"/>
</dbReference>
<dbReference type="RefSeq" id="WP_010874387.1">
    <property type="nucleotide sequence ID" value="NZ_OU342337.1"/>
</dbReference>
<dbReference type="SMR" id="P75084"/>
<dbReference type="STRING" id="272634.MPN_030"/>
<dbReference type="EnsemblBacteria" id="AAB95772">
    <property type="protein sequence ID" value="AAB95772"/>
    <property type="gene ID" value="MPN_030"/>
</dbReference>
<dbReference type="KEGG" id="mpn:MPN_030"/>
<dbReference type="PATRIC" id="fig|272634.6.peg.29"/>
<dbReference type="HOGENOM" id="CLU_1766001_0_0_14"/>
<dbReference type="OrthoDB" id="9915610at2"/>
<dbReference type="BioCyc" id="MPNE272634:G1GJ3-44-MONOMER"/>
<dbReference type="Proteomes" id="UP000000808">
    <property type="component" value="Chromosome"/>
</dbReference>
<dbReference type="Gene3D" id="1.10.940.10">
    <property type="entry name" value="NusB-like"/>
    <property type="match status" value="1"/>
</dbReference>
<dbReference type="InterPro" id="IPR015268">
    <property type="entry name" value="DUF1948"/>
</dbReference>
<dbReference type="InterPro" id="IPR035926">
    <property type="entry name" value="NusB-like_sf"/>
</dbReference>
<dbReference type="Pfam" id="PF09185">
    <property type="entry name" value="DUF1948"/>
    <property type="match status" value="1"/>
</dbReference>
<dbReference type="SUPFAM" id="SSF48013">
    <property type="entry name" value="NusB-like"/>
    <property type="match status" value="1"/>
</dbReference>
<gene>
    <name type="ordered locus">MPN_030</name>
    <name type="ORF">B01_orf168</name>
    <name type="ORF">MP124</name>
</gene>
<name>Y030_MYCPN</name>
<feature type="chain" id="PRO_0000210390" description="Uncharacterized protein MG027 homolog">
    <location>
        <begin position="1"/>
        <end position="168"/>
    </location>
</feature>
<organism>
    <name type="scientific">Mycoplasma pneumoniae (strain ATCC 29342 / M129 / Subtype 1)</name>
    <name type="common">Mycoplasmoides pneumoniae</name>
    <dbReference type="NCBI Taxonomy" id="272634"/>
    <lineage>
        <taxon>Bacteria</taxon>
        <taxon>Bacillati</taxon>
        <taxon>Mycoplasmatota</taxon>
        <taxon>Mycoplasmoidales</taxon>
        <taxon>Mycoplasmoidaceae</taxon>
        <taxon>Mycoplasmoides</taxon>
    </lineage>
</organism>